<gene>
    <name evidence="1" type="primary">tatE</name>
    <name type="ordered locus">Entcl_3169</name>
</gene>
<accession>E3G4M1</accession>
<reference key="1">
    <citation type="journal article" date="2011" name="Stand. Genomic Sci.">
        <title>Complete genome sequence of 'Enterobacter lignolyticus' SCF1.</title>
        <authorList>
            <person name="Deangelis K.M."/>
            <person name="D'Haeseleer P."/>
            <person name="Chivian D."/>
            <person name="Fortney J.L."/>
            <person name="Khudyakov J."/>
            <person name="Simmons B."/>
            <person name="Woo H."/>
            <person name="Arkin A.P."/>
            <person name="Davenport K.W."/>
            <person name="Goodwin L."/>
            <person name="Chen A."/>
            <person name="Ivanova N."/>
            <person name="Kyrpides N.C."/>
            <person name="Mavromatis K."/>
            <person name="Woyke T."/>
            <person name="Hazen T.C."/>
        </authorList>
    </citation>
    <scope>NUCLEOTIDE SEQUENCE [LARGE SCALE GENOMIC DNA]</scope>
    <source>
        <strain>SCF1</strain>
    </source>
</reference>
<protein>
    <recommendedName>
        <fullName evidence="1">Probable Sec-independent protein translocase protein TatE</fullName>
    </recommendedName>
</protein>
<keyword id="KW-0997">Cell inner membrane</keyword>
<keyword id="KW-1003">Cell membrane</keyword>
<keyword id="KW-0472">Membrane</keyword>
<keyword id="KW-0653">Protein transport</keyword>
<keyword id="KW-1185">Reference proteome</keyword>
<keyword id="KW-0811">Translocation</keyword>
<keyword id="KW-0812">Transmembrane</keyword>
<keyword id="KW-1133">Transmembrane helix</keyword>
<keyword id="KW-0813">Transport</keyword>
<evidence type="ECO:0000255" key="1">
    <source>
        <dbReference type="HAMAP-Rule" id="MF_00903"/>
    </source>
</evidence>
<evidence type="ECO:0000256" key="2">
    <source>
        <dbReference type="SAM" id="MobiDB-lite"/>
    </source>
</evidence>
<proteinExistence type="inferred from homology"/>
<sequence>MGEISITKLLVVAALIVLVFGTKKLRTLGGDLGSAIKGFKKAMNDDDTSVKKSAEEDVPADKISHKE</sequence>
<dbReference type="EMBL" id="CP002272">
    <property type="protein sequence ID" value="ADO49415.1"/>
    <property type="molecule type" value="Genomic_DNA"/>
</dbReference>
<dbReference type="RefSeq" id="WP_013367145.1">
    <property type="nucleotide sequence ID" value="NC_014618.1"/>
</dbReference>
<dbReference type="SMR" id="E3G4M1"/>
<dbReference type="STRING" id="701347.Entcl_3169"/>
<dbReference type="KEGG" id="esc:Entcl_3169"/>
<dbReference type="eggNOG" id="COG1826">
    <property type="taxonomic scope" value="Bacteria"/>
</dbReference>
<dbReference type="HOGENOM" id="CLU_086034_5_3_6"/>
<dbReference type="Proteomes" id="UP000006872">
    <property type="component" value="Chromosome"/>
</dbReference>
<dbReference type="GO" id="GO:0033281">
    <property type="term" value="C:TAT protein transport complex"/>
    <property type="evidence" value="ECO:0007669"/>
    <property type="project" value="UniProtKB-UniRule"/>
</dbReference>
<dbReference type="GO" id="GO:0008320">
    <property type="term" value="F:protein transmembrane transporter activity"/>
    <property type="evidence" value="ECO:0007669"/>
    <property type="project" value="UniProtKB-UniRule"/>
</dbReference>
<dbReference type="GO" id="GO:0043953">
    <property type="term" value="P:protein transport by the Tat complex"/>
    <property type="evidence" value="ECO:0007669"/>
    <property type="project" value="UniProtKB-UniRule"/>
</dbReference>
<dbReference type="FunFam" id="1.20.5.3310:FF:000001">
    <property type="entry name" value="Probable Sec-independent protein translocase protein TatE"/>
    <property type="match status" value="1"/>
</dbReference>
<dbReference type="Gene3D" id="1.20.5.3310">
    <property type="match status" value="1"/>
</dbReference>
<dbReference type="HAMAP" id="MF_00236">
    <property type="entry name" value="TatA_E"/>
    <property type="match status" value="1"/>
</dbReference>
<dbReference type="HAMAP" id="MF_00903">
    <property type="entry name" value="TatE"/>
    <property type="match status" value="1"/>
</dbReference>
<dbReference type="InterPro" id="IPR003369">
    <property type="entry name" value="TatA/B/E"/>
</dbReference>
<dbReference type="InterPro" id="IPR006312">
    <property type="entry name" value="TatA/E"/>
</dbReference>
<dbReference type="InterPro" id="IPR024905">
    <property type="entry name" value="TatE"/>
</dbReference>
<dbReference type="NCBIfam" id="NF002448">
    <property type="entry name" value="PRK01614.1"/>
    <property type="match status" value="1"/>
</dbReference>
<dbReference type="NCBIfam" id="NF002960">
    <property type="entry name" value="PRK03625.1"/>
    <property type="match status" value="1"/>
</dbReference>
<dbReference type="NCBIfam" id="TIGR01411">
    <property type="entry name" value="tatAE"/>
    <property type="match status" value="1"/>
</dbReference>
<dbReference type="PANTHER" id="PTHR42982">
    <property type="entry name" value="SEC-INDEPENDENT PROTEIN TRANSLOCASE PROTEIN TATA"/>
    <property type="match status" value="1"/>
</dbReference>
<dbReference type="PANTHER" id="PTHR42982:SF5">
    <property type="entry name" value="SEC-INDEPENDENT PROTEIN TRANSLOCASE PROTEIN TATE"/>
    <property type="match status" value="1"/>
</dbReference>
<dbReference type="Pfam" id="PF02416">
    <property type="entry name" value="TatA_B_E"/>
    <property type="match status" value="1"/>
</dbReference>
<name>TATE_ENTLS</name>
<comment type="function">
    <text evidence="1">Part of the twin-arginine translocation (Tat) system that transports large folded proteins containing a characteristic twin-arginine motif in their signal peptide across membranes. TatE shares overlapping functions with TatA.</text>
</comment>
<comment type="subcellular location">
    <subcellularLocation>
        <location evidence="1">Cell inner membrane</location>
        <topology evidence="1">Single-pass membrane protein</topology>
    </subcellularLocation>
</comment>
<comment type="similarity">
    <text evidence="1">Belongs to the TatA/E family. TatE subfamily.</text>
</comment>
<organism>
    <name type="scientific">Enterobacter lignolyticus (strain SCF1)</name>
    <dbReference type="NCBI Taxonomy" id="701347"/>
    <lineage>
        <taxon>Bacteria</taxon>
        <taxon>Pseudomonadati</taxon>
        <taxon>Pseudomonadota</taxon>
        <taxon>Gammaproteobacteria</taxon>
        <taxon>Enterobacterales</taxon>
        <taxon>Enterobacteriaceae</taxon>
        <taxon>Pluralibacter</taxon>
    </lineage>
</organism>
<feature type="chain" id="PRO_0000412964" description="Probable Sec-independent protein translocase protein TatE">
    <location>
        <begin position="1"/>
        <end position="67"/>
    </location>
</feature>
<feature type="transmembrane region" description="Helical" evidence="1">
    <location>
        <begin position="4"/>
        <end position="21"/>
    </location>
</feature>
<feature type="region of interest" description="Disordered" evidence="2">
    <location>
        <begin position="43"/>
        <end position="67"/>
    </location>
</feature>